<reference key="1">
    <citation type="journal article" date="2001" name="DNA Res.">
        <title>Prediction of the coding sequences of unidentified human genes. XX. The complete sequences of 100 new cDNA clones from brain which code for large proteins in vitro.</title>
        <authorList>
            <person name="Nagase T."/>
            <person name="Nakayama M."/>
            <person name="Nakajima D."/>
            <person name="Kikuno R."/>
            <person name="Ohara O."/>
        </authorList>
    </citation>
    <scope>NUCLEOTIDE SEQUENCE [LARGE SCALE MRNA] (ISOFORM 2)</scope>
    <source>
        <tissue>Brain</tissue>
    </source>
</reference>
<reference key="2">
    <citation type="journal article" date="2007" name="BMC Genomics">
        <title>The full-ORF clone resource of the German cDNA consortium.</title>
        <authorList>
            <person name="Bechtel S."/>
            <person name="Rosenfelder H."/>
            <person name="Duda A."/>
            <person name="Schmidt C.P."/>
            <person name="Ernst U."/>
            <person name="Wellenreuther R."/>
            <person name="Mehrle A."/>
            <person name="Schuster C."/>
            <person name="Bahr A."/>
            <person name="Bloecker H."/>
            <person name="Heubner D."/>
            <person name="Hoerlein A."/>
            <person name="Michel G."/>
            <person name="Wedler H."/>
            <person name="Koehrer K."/>
            <person name="Ottenwaelder B."/>
            <person name="Poustka A."/>
            <person name="Wiemann S."/>
            <person name="Schupp I."/>
        </authorList>
    </citation>
    <scope>NUCLEOTIDE SEQUENCE [LARGE SCALE MRNA] (ISOFORM 1)</scope>
</reference>
<reference key="3">
    <citation type="journal article" date="2000" name="J. Biol. Chem.">
        <title>Eos and pegasus, two members of the Ikaros family of proteins with distinct DNA binding activities.</title>
        <authorList>
            <person name="Perdomo J."/>
            <person name="Holmes M."/>
            <person name="Chong B."/>
            <person name="Crossley M."/>
        </authorList>
    </citation>
    <scope>NUCLEOTIDE SEQUENCE [MRNA] OF 53-585 (ISOFORM 1)</scope>
    <scope>FUNCTION</scope>
    <scope>TISSUE SPECIFICITY</scope>
    <scope>INTERACTION WITH IKZF1; IKZF2; IKZF3 AND IKZF5</scope>
</reference>
<reference key="4">
    <citation type="journal article" date="2002" name="J. Biol. Chem.">
        <title>A molecular dissection of the repression circuitry of Ikaros.</title>
        <authorList>
            <person name="Koipally J."/>
            <person name="Georgopoulos K."/>
        </authorList>
    </citation>
    <scope>FUNCTION</scope>
</reference>
<reference key="5">
    <citation type="journal article" date="2002" name="Eur. J. Biochem.">
        <title>The Ikaros family protein Eos associates with C-terminal-binding protein corepressors.</title>
        <authorList>
            <person name="Perdomo J."/>
            <person name="Crossley M."/>
        </authorList>
    </citation>
    <scope>FUNCTION</scope>
    <scope>INTERACTION WITH CTBP2</scope>
    <scope>SUBCELLULAR LOCATION</scope>
    <scope>MUTAGENESIS OF 425-PRO--ASP-427</scope>
</reference>
<reference key="6">
    <citation type="journal article" date="2013" name="J. Proteome Res.">
        <title>Toward a comprehensive characterization of a human cancer cell phosphoproteome.</title>
        <authorList>
            <person name="Zhou H."/>
            <person name="Di Palma S."/>
            <person name="Preisinger C."/>
            <person name="Peng M."/>
            <person name="Polat A.N."/>
            <person name="Heck A.J."/>
            <person name="Mohammed S."/>
        </authorList>
    </citation>
    <scope>IDENTIFICATION BY MASS SPECTROMETRY [LARGE SCALE ANALYSIS]</scope>
    <source>
        <tissue>Erythroleukemia</tissue>
    </source>
</reference>
<reference key="7">
    <citation type="journal article" date="2017" name="Nat. Struct. Mol. Biol.">
        <title>Site-specific mapping of the human SUMO proteome reveals co-modification with phosphorylation.</title>
        <authorList>
            <person name="Hendriks I.A."/>
            <person name="Lyon D."/>
            <person name="Young C."/>
            <person name="Jensen L.J."/>
            <person name="Vertegaal A.C."/>
            <person name="Nielsen M.L."/>
        </authorList>
    </citation>
    <scope>SUMOYLATION [LARGE SCALE ANALYSIS] AT LYS-100 AND LYS-500</scope>
    <scope>IDENTIFICATION BY MASS SPECTROMETRY [LARGE SCALE ANALYSIS]</scope>
</reference>
<reference key="8">
    <citation type="submission" date="2013-09" db="PDB data bank">
        <title>Solution NMR structure of zinc finger protein EOS from Homo sapiens, Northeast structural genomics consortium (NESG) target HR7992A.</title>
        <authorList>
            <consortium name="Northeast structural genomics consortium (NESG)"/>
        </authorList>
    </citation>
    <scope>STRUCTURE BY NMR OF 155-216 IN COMPLEX WITH ZINC IONS</scope>
</reference>
<feature type="chain" id="PRO_0000299468" description="Zinc finger protein Eos">
    <location>
        <begin position="1"/>
        <end position="585"/>
    </location>
</feature>
<feature type="zinc finger region" description="C2H2-type 1" evidence="3">
    <location>
        <begin position="159"/>
        <end position="181"/>
    </location>
</feature>
<feature type="zinc finger region" description="C2H2-type 2" evidence="3">
    <location>
        <begin position="187"/>
        <end position="209"/>
    </location>
</feature>
<feature type="zinc finger region" description="C2H2-type 3" evidence="3">
    <location>
        <begin position="215"/>
        <end position="237"/>
    </location>
</feature>
<feature type="zinc finger region" description="C2H2-type 4" evidence="3">
    <location>
        <begin position="248"/>
        <end position="271"/>
    </location>
</feature>
<feature type="zinc finger region" description="C2H2-type 5" evidence="3">
    <location>
        <begin position="530"/>
        <end position="552"/>
    </location>
</feature>
<feature type="zinc finger region" description="C2H2-type 6" evidence="3">
    <location>
        <begin position="558"/>
        <end position="582"/>
    </location>
</feature>
<feature type="region of interest" description="Disordered" evidence="4">
    <location>
        <begin position="1"/>
        <end position="43"/>
    </location>
</feature>
<feature type="region of interest" description="Disordered" evidence="4">
    <location>
        <begin position="68"/>
        <end position="98"/>
    </location>
</feature>
<feature type="region of interest" description="Interaction with FOXP3" evidence="1">
    <location>
        <begin position="281"/>
        <end position="585"/>
    </location>
</feature>
<feature type="region of interest" description="Disordered" evidence="4">
    <location>
        <begin position="410"/>
        <end position="489"/>
    </location>
</feature>
<feature type="short sequence motif" description="CTBP-binding motif PEDLA">
    <location>
        <begin position="425"/>
        <end position="429"/>
    </location>
</feature>
<feature type="compositionally biased region" description="Basic and acidic residues" evidence="4">
    <location>
        <begin position="25"/>
        <end position="34"/>
    </location>
</feature>
<feature type="compositionally biased region" description="Polar residues" evidence="4">
    <location>
        <begin position="79"/>
        <end position="98"/>
    </location>
</feature>
<feature type="compositionally biased region" description="Pro residues" evidence="4">
    <location>
        <begin position="475"/>
        <end position="484"/>
    </location>
</feature>
<feature type="modified residue" description="Phosphoserine" evidence="2">
    <location>
        <position position="105"/>
    </location>
</feature>
<feature type="modified residue" description="N6-acetyllysine" evidence="2">
    <location>
        <position position="335"/>
    </location>
</feature>
<feature type="cross-link" description="Glycyl lysine isopeptide (Lys-Gly) (interchain with G-Cter in SUMO2)" evidence="10">
    <location>
        <position position="100"/>
    </location>
</feature>
<feature type="cross-link" description="Glycyl lysine isopeptide (Lys-Gly) (interchain with G-Cter in SUMO2)" evidence="10">
    <location>
        <position position="500"/>
    </location>
</feature>
<feature type="splice variant" id="VSP_027688" description="In isoform 2." evidence="8">
    <original>MHTPPALPRRFQGGGRVRTPGSHRQGKDNLERDPSGGCVPDFLPQAQDSNHFIMESLFCES</original>
    <variation>MDSRYLQLQLYLPSCSLLQG</variation>
    <location>
        <begin position="1"/>
        <end position="61"/>
    </location>
</feature>
<feature type="mutagenesis site" description="No effect on CTBP2 interaction." evidence="7">
    <original>PED</original>
    <variation>AAA</variation>
    <location>
        <begin position="425"/>
        <end position="427"/>
    </location>
</feature>
<feature type="sequence conflict" description="In Ref. 3; AAG39221." evidence="9" ref="3">
    <original>E</original>
    <variation>K</variation>
    <location>
        <position position="145"/>
    </location>
</feature>
<feature type="sequence conflict" description="In Ref. 3; AAG39221." evidence="9" ref="3">
    <original>P</original>
    <variation>A</variation>
    <location>
        <position position="310"/>
    </location>
</feature>
<feature type="sequence conflict" description="In Ref. 3; AAG39221." evidence="9" ref="3">
    <original>A</original>
    <variation>G</variation>
    <location>
        <position position="361"/>
    </location>
</feature>
<feature type="sequence conflict" description="In Ref. 3; AAG39221." evidence="9" ref="3">
    <original>N</original>
    <variation>H</variation>
    <location>
        <position position="390"/>
    </location>
</feature>
<feature type="sequence conflict" description="In Ref. 3; AAG39221." evidence="9" ref="3">
    <original>G</original>
    <variation>S</variation>
    <location>
        <position position="524"/>
    </location>
</feature>
<feature type="helix" evidence="11">
    <location>
        <begin position="173"/>
        <end position="181"/>
    </location>
</feature>
<feature type="strand" evidence="11">
    <location>
        <begin position="187"/>
        <end position="189"/>
    </location>
</feature>
<feature type="turn" evidence="11">
    <location>
        <begin position="190"/>
        <end position="193"/>
    </location>
</feature>
<feature type="strand" evidence="11">
    <location>
        <begin position="194"/>
        <end position="197"/>
    </location>
</feature>
<feature type="helix" evidence="11">
    <location>
        <begin position="199"/>
        <end position="205"/>
    </location>
</feature>
<feature type="turn" evidence="11">
    <location>
        <begin position="206"/>
        <end position="209"/>
    </location>
</feature>
<organism>
    <name type="scientific">Homo sapiens</name>
    <name type="common">Human</name>
    <dbReference type="NCBI Taxonomy" id="9606"/>
    <lineage>
        <taxon>Eukaryota</taxon>
        <taxon>Metazoa</taxon>
        <taxon>Chordata</taxon>
        <taxon>Craniata</taxon>
        <taxon>Vertebrata</taxon>
        <taxon>Euteleostomi</taxon>
        <taxon>Mammalia</taxon>
        <taxon>Eutheria</taxon>
        <taxon>Euarchontoglires</taxon>
        <taxon>Primates</taxon>
        <taxon>Haplorrhini</taxon>
        <taxon>Catarrhini</taxon>
        <taxon>Hominidae</taxon>
        <taxon>Homo</taxon>
    </lineage>
</organism>
<proteinExistence type="evidence at protein level"/>
<name>IKZF4_HUMAN</name>
<sequence length="585" mass="64106">MHTPPALPRRFQGGGRVRTPGSHRQGKDNLERDPSGGCVPDFLPQAQDSNHFIMESLFCESSGDSSLEKEFLGAPVGPSVSTPNSQHSSPSRSLSANSIKVEMYSDEESSRLLGPDERLLEKDDSVIVEDSLSEPLGYCDGSGPEPHSPGGIRLPNGKLKCDVCGMVCIGPNVLMVHKRSHTGERPFHCNQCGASFTQKGNLLRHIKLHSGEKPFKCPFCNYACRRRDALTGHLRTHSVSSPTVGKPYKCNYCGRSYKQQSTLEEHKERCHNYLQSLSTEAQALAGQPGDEIRDLEMVPDSMLHSSSERPTFIDRLANSLTKRKRSTPQKFVGEKQMRFSLSDLPYDVNSGGYEKDVELVAHHSLEPGFGSSLAFVGAEHLRPLRLPPTNCISELTPVISSVYTQMQPLPGRLELPGSREAGEGPEDLADGGPLLYRPRGPLTDPGASPSNGCQDSTDTESNHEDRVAGVVSLPQGPPPQPPPTIVVGRHSPAYAKEDPKPQEGLLRGTPGPSKEVLRVVGESGEPVKAFKCEHCRILFLDHVMFTIHMGCHGFRDPFECNICGYHSQDRYEFSSHIVRGEHKVG</sequence>
<keyword id="KW-0002">3D-structure</keyword>
<keyword id="KW-0007">Acetylation</keyword>
<keyword id="KW-0025">Alternative splicing</keyword>
<keyword id="KW-0238">DNA-binding</keyword>
<keyword id="KW-1017">Isopeptide bond</keyword>
<keyword id="KW-0479">Metal-binding</keyword>
<keyword id="KW-0539">Nucleus</keyword>
<keyword id="KW-0597">Phosphoprotein</keyword>
<keyword id="KW-1267">Proteomics identification</keyword>
<keyword id="KW-1185">Reference proteome</keyword>
<keyword id="KW-0677">Repeat</keyword>
<keyword id="KW-0678">Repressor</keyword>
<keyword id="KW-0804">Transcription</keyword>
<keyword id="KW-0805">Transcription regulation</keyword>
<keyword id="KW-0832">Ubl conjugation</keyword>
<keyword id="KW-0862">Zinc</keyword>
<keyword id="KW-0863">Zinc-finger</keyword>
<dbReference type="EMBL" id="AB058685">
    <property type="protein sequence ID" value="BAB47411.1"/>
    <property type="status" value="ALT_INIT"/>
    <property type="molecule type" value="mRNA"/>
</dbReference>
<dbReference type="EMBL" id="BX647761">
    <property type="status" value="NOT_ANNOTATED_CDS"/>
    <property type="molecule type" value="mRNA"/>
</dbReference>
<dbReference type="EMBL" id="AF230809">
    <property type="protein sequence ID" value="AAG39221.1"/>
    <property type="status" value="ALT_INIT"/>
    <property type="molecule type" value="mRNA"/>
</dbReference>
<dbReference type="CCDS" id="CCDS44917.1">
    <molecule id="Q9H2S9-1"/>
</dbReference>
<dbReference type="RefSeq" id="NP_001338018.1">
    <molecule id="Q9H2S9-1"/>
    <property type="nucleotide sequence ID" value="NM_001351089.2"/>
</dbReference>
<dbReference type="RefSeq" id="NP_071910.3">
    <molecule id="Q9H2S9-1"/>
    <property type="nucleotide sequence ID" value="NM_022465.3"/>
</dbReference>
<dbReference type="RefSeq" id="XP_016875294.1">
    <property type="nucleotide sequence ID" value="XM_017019805.1"/>
</dbReference>
<dbReference type="RefSeq" id="XP_016875295.1">
    <molecule id="Q9H2S9-1"/>
    <property type="nucleotide sequence ID" value="XM_017019806.2"/>
</dbReference>
<dbReference type="RefSeq" id="XP_016875296.1">
    <property type="nucleotide sequence ID" value="XM_017019807.1"/>
</dbReference>
<dbReference type="RefSeq" id="XP_016875297.1">
    <property type="nucleotide sequence ID" value="XM_017019808.1"/>
</dbReference>
<dbReference type="RefSeq" id="XP_016875298.1">
    <property type="nucleotide sequence ID" value="XM_017019809.1"/>
</dbReference>
<dbReference type="RefSeq" id="XP_016875299.1">
    <molecule id="Q9H2S9-1"/>
    <property type="nucleotide sequence ID" value="XM_017019810.2"/>
</dbReference>
<dbReference type="RefSeq" id="XP_016875300.1">
    <property type="nucleotide sequence ID" value="XM_017019811.1"/>
</dbReference>
<dbReference type="RefSeq" id="XP_047285297.1">
    <molecule id="Q9H2S9-1"/>
    <property type="nucleotide sequence ID" value="XM_047429341.1"/>
</dbReference>
<dbReference type="RefSeq" id="XP_047285302.1">
    <molecule id="Q9H2S9-2"/>
    <property type="nucleotide sequence ID" value="XM_047429346.1"/>
</dbReference>
<dbReference type="RefSeq" id="XP_054228855.1">
    <molecule id="Q9H2S9-1"/>
    <property type="nucleotide sequence ID" value="XM_054372880.1"/>
</dbReference>
<dbReference type="RefSeq" id="XP_054228856.1">
    <molecule id="Q9H2S9-1"/>
    <property type="nucleotide sequence ID" value="XM_054372881.1"/>
</dbReference>
<dbReference type="RefSeq" id="XP_054228857.1">
    <molecule id="Q9H2S9-1"/>
    <property type="nucleotide sequence ID" value="XM_054372882.1"/>
</dbReference>
<dbReference type="RefSeq" id="XP_054228863.1">
    <molecule id="Q9H2S9-2"/>
    <property type="nucleotide sequence ID" value="XM_054372888.1"/>
</dbReference>
<dbReference type="PDB" id="2MA7">
    <property type="method" value="NMR"/>
    <property type="chains" value="A=155-216"/>
</dbReference>
<dbReference type="PDBsum" id="2MA7"/>
<dbReference type="SMR" id="Q9H2S9"/>
<dbReference type="BioGRID" id="122146">
    <property type="interactions" value="49"/>
</dbReference>
<dbReference type="CORUM" id="Q9H2S9"/>
<dbReference type="ELM" id="Q9H2S9"/>
<dbReference type="FunCoup" id="Q9H2S9">
    <property type="interactions" value="1238"/>
</dbReference>
<dbReference type="IntAct" id="Q9H2S9">
    <property type="interactions" value="26"/>
</dbReference>
<dbReference type="STRING" id="9606.ENSP00000448419"/>
<dbReference type="GlyGen" id="Q9H2S9">
    <property type="glycosylation" value="1 site"/>
</dbReference>
<dbReference type="iPTMnet" id="Q9H2S9"/>
<dbReference type="PhosphoSitePlus" id="Q9H2S9"/>
<dbReference type="BioMuta" id="IKZF4"/>
<dbReference type="DMDM" id="158564025"/>
<dbReference type="jPOST" id="Q9H2S9"/>
<dbReference type="MassIVE" id="Q9H2S9"/>
<dbReference type="PaxDb" id="9606-ENSP00000262032"/>
<dbReference type="PeptideAtlas" id="Q9H2S9"/>
<dbReference type="ProteomicsDB" id="80588">
    <molecule id="Q9H2S9-1"/>
</dbReference>
<dbReference type="ProteomicsDB" id="80589">
    <molecule id="Q9H2S9-2"/>
</dbReference>
<dbReference type="Antibodypedia" id="27854">
    <property type="antibodies" value="181 antibodies from 30 providers"/>
</dbReference>
<dbReference type="DNASU" id="64375"/>
<dbReference type="Ensembl" id="ENST00000262032.9">
    <molecule id="Q9H2S9-1"/>
    <property type="protein sequence ID" value="ENSP00000262032.5"/>
    <property type="gene ID" value="ENSG00000123411.15"/>
</dbReference>
<dbReference type="Ensembl" id="ENST00000431367.6">
    <molecule id="Q9H2S9-1"/>
    <property type="protein sequence ID" value="ENSP00000412101.3"/>
    <property type="gene ID" value="ENSG00000123411.15"/>
</dbReference>
<dbReference type="Ensembl" id="ENST00000547167.6">
    <molecule id="Q9H2S9-1"/>
    <property type="protein sequence ID" value="ENSP00000448419.1"/>
    <property type="gene ID" value="ENSG00000123411.15"/>
</dbReference>
<dbReference type="GeneID" id="64375"/>
<dbReference type="KEGG" id="hsa:64375"/>
<dbReference type="MANE-Select" id="ENST00000547167.6">
    <property type="protein sequence ID" value="ENSP00000448419.1"/>
    <property type="RefSeq nucleotide sequence ID" value="NM_022465.4"/>
    <property type="RefSeq protein sequence ID" value="NP_071910.3"/>
</dbReference>
<dbReference type="UCSC" id="uc001sjb.1">
    <molecule id="Q9H2S9-1"/>
    <property type="organism name" value="human"/>
</dbReference>
<dbReference type="AGR" id="HGNC:13179"/>
<dbReference type="CTD" id="64375"/>
<dbReference type="DisGeNET" id="64375"/>
<dbReference type="GeneCards" id="IKZF4"/>
<dbReference type="HGNC" id="HGNC:13179">
    <property type="gene designation" value="IKZF4"/>
</dbReference>
<dbReference type="HPA" id="ENSG00000123411">
    <property type="expression patterns" value="Low tissue specificity"/>
</dbReference>
<dbReference type="MIM" id="606239">
    <property type="type" value="gene"/>
</dbReference>
<dbReference type="neXtProt" id="NX_Q9H2S9"/>
<dbReference type="OpenTargets" id="ENSG00000123411"/>
<dbReference type="PharmGKB" id="PA162391948"/>
<dbReference type="VEuPathDB" id="HostDB:ENSG00000123411"/>
<dbReference type="eggNOG" id="KOG1721">
    <property type="taxonomic scope" value="Eukaryota"/>
</dbReference>
<dbReference type="GeneTree" id="ENSGT00940000158308"/>
<dbReference type="HOGENOM" id="CLU_025502_0_0_1"/>
<dbReference type="InParanoid" id="Q9H2S9"/>
<dbReference type="OMA" id="LCGMVCI"/>
<dbReference type="OrthoDB" id="8922241at2759"/>
<dbReference type="PAN-GO" id="Q9H2S9">
    <property type="GO annotations" value="3 GO annotations based on evolutionary models"/>
</dbReference>
<dbReference type="PhylomeDB" id="Q9H2S9"/>
<dbReference type="TreeFam" id="TF331189"/>
<dbReference type="PathwayCommons" id="Q9H2S9"/>
<dbReference type="SignaLink" id="Q9H2S9"/>
<dbReference type="SIGNOR" id="Q9H2S9"/>
<dbReference type="BioGRID-ORCS" id="64375">
    <property type="hits" value="17 hits in 1175 CRISPR screens"/>
</dbReference>
<dbReference type="ChiTaRS" id="IKZF4">
    <property type="organism name" value="human"/>
</dbReference>
<dbReference type="EvolutionaryTrace" id="Q9H2S9"/>
<dbReference type="GeneWiki" id="IKZF4"/>
<dbReference type="GenomeRNAi" id="64375"/>
<dbReference type="Pharos" id="Q9H2S9">
    <property type="development level" value="Tbio"/>
</dbReference>
<dbReference type="PRO" id="PR:Q9H2S9"/>
<dbReference type="Proteomes" id="UP000005640">
    <property type="component" value="Chromosome 12"/>
</dbReference>
<dbReference type="RNAct" id="Q9H2S9">
    <property type="molecule type" value="protein"/>
</dbReference>
<dbReference type="Bgee" id="ENSG00000123411">
    <property type="expression patterns" value="Expressed in buccal mucosa cell and 174 other cell types or tissues"/>
</dbReference>
<dbReference type="ExpressionAtlas" id="Q9H2S9">
    <property type="expression patterns" value="baseline and differential"/>
</dbReference>
<dbReference type="GO" id="GO:0016604">
    <property type="term" value="C:nuclear body"/>
    <property type="evidence" value="ECO:0000314"/>
    <property type="project" value="HPA"/>
</dbReference>
<dbReference type="GO" id="GO:0005654">
    <property type="term" value="C:nucleoplasm"/>
    <property type="evidence" value="ECO:0000314"/>
    <property type="project" value="HPA"/>
</dbReference>
<dbReference type="GO" id="GO:0005634">
    <property type="term" value="C:nucleus"/>
    <property type="evidence" value="ECO:0000304"/>
    <property type="project" value="UniProtKB"/>
</dbReference>
<dbReference type="GO" id="GO:0032991">
    <property type="term" value="C:protein-containing complex"/>
    <property type="evidence" value="ECO:0000315"/>
    <property type="project" value="CAFA"/>
</dbReference>
<dbReference type="GO" id="GO:0043425">
    <property type="term" value="F:bHLH transcription factor binding"/>
    <property type="evidence" value="ECO:0007669"/>
    <property type="project" value="Ensembl"/>
</dbReference>
<dbReference type="GO" id="GO:0003700">
    <property type="term" value="F:DNA-binding transcription factor activity"/>
    <property type="evidence" value="ECO:0000318"/>
    <property type="project" value="GO_Central"/>
</dbReference>
<dbReference type="GO" id="GO:0019904">
    <property type="term" value="F:protein domain specific binding"/>
    <property type="evidence" value="ECO:0000353"/>
    <property type="project" value="CAFA"/>
</dbReference>
<dbReference type="GO" id="GO:0000978">
    <property type="term" value="F:RNA polymerase II cis-regulatory region sequence-specific DNA binding"/>
    <property type="evidence" value="ECO:0000318"/>
    <property type="project" value="GO_Central"/>
</dbReference>
<dbReference type="GO" id="GO:0008270">
    <property type="term" value="F:zinc ion binding"/>
    <property type="evidence" value="ECO:0000315"/>
    <property type="project" value="CAFA"/>
</dbReference>
<dbReference type="GO" id="GO:0045892">
    <property type="term" value="P:negative regulation of DNA-templated transcription"/>
    <property type="evidence" value="ECO:0000304"/>
    <property type="project" value="UniProtKB"/>
</dbReference>
<dbReference type="GO" id="GO:0045944">
    <property type="term" value="P:positive regulation of transcription by RNA polymerase II"/>
    <property type="evidence" value="ECO:0007669"/>
    <property type="project" value="Ensembl"/>
</dbReference>
<dbReference type="GO" id="GO:0051260">
    <property type="term" value="P:protein homooligomerization"/>
    <property type="evidence" value="ECO:0000315"/>
    <property type="project" value="CAFA"/>
</dbReference>
<dbReference type="GO" id="GO:0006357">
    <property type="term" value="P:regulation of transcription by RNA polymerase II"/>
    <property type="evidence" value="ECO:0000318"/>
    <property type="project" value="GO_Central"/>
</dbReference>
<dbReference type="FunFam" id="3.30.160.60:FF:000525">
    <property type="entry name" value="IKAROS family zinc finger 1"/>
    <property type="match status" value="1"/>
</dbReference>
<dbReference type="FunFam" id="3.30.160.60:FF:000124">
    <property type="entry name" value="IKAROS family zinc finger 4"/>
    <property type="match status" value="1"/>
</dbReference>
<dbReference type="FunFam" id="3.30.160.60:FF:000372">
    <property type="entry name" value="IKAROS family zinc finger 4"/>
    <property type="match status" value="1"/>
</dbReference>
<dbReference type="FunFam" id="3.30.160.60:FF:000168">
    <property type="entry name" value="zinc finger protein Eos isoform X1"/>
    <property type="match status" value="1"/>
</dbReference>
<dbReference type="FunFam" id="3.30.160.60:FF:000738">
    <property type="entry name" value="zinc finger protein Eos isoform X1"/>
    <property type="match status" value="1"/>
</dbReference>
<dbReference type="Gene3D" id="3.30.160.60">
    <property type="entry name" value="Classic Zinc Finger"/>
    <property type="match status" value="5"/>
</dbReference>
<dbReference type="InterPro" id="IPR050589">
    <property type="entry name" value="Ikaros_C2H2-ZF"/>
</dbReference>
<dbReference type="InterPro" id="IPR036236">
    <property type="entry name" value="Znf_C2H2_sf"/>
</dbReference>
<dbReference type="InterPro" id="IPR013087">
    <property type="entry name" value="Znf_C2H2_type"/>
</dbReference>
<dbReference type="PANTHER" id="PTHR24404">
    <property type="entry name" value="ZINC FINGER PROTEIN"/>
    <property type="match status" value="1"/>
</dbReference>
<dbReference type="PANTHER" id="PTHR24404:SF28">
    <property type="entry name" value="ZINC FINGER PROTEIN EOS"/>
    <property type="match status" value="1"/>
</dbReference>
<dbReference type="Pfam" id="PF00096">
    <property type="entry name" value="zf-C2H2"/>
    <property type="match status" value="3"/>
</dbReference>
<dbReference type="SMART" id="SM00355">
    <property type="entry name" value="ZnF_C2H2"/>
    <property type="match status" value="6"/>
</dbReference>
<dbReference type="SUPFAM" id="SSF57667">
    <property type="entry name" value="beta-beta-alpha zinc fingers"/>
    <property type="match status" value="3"/>
</dbReference>
<dbReference type="PROSITE" id="PS00028">
    <property type="entry name" value="ZINC_FINGER_C2H2_1"/>
    <property type="match status" value="5"/>
</dbReference>
<dbReference type="PROSITE" id="PS50157">
    <property type="entry name" value="ZINC_FINGER_C2H2_2"/>
    <property type="match status" value="4"/>
</dbReference>
<accession>Q9H2S9</accession>
<accession>Q96JP3</accession>
<evidence type="ECO:0000250" key="1">
    <source>
        <dbReference type="UniProtKB" id="Q8C208"/>
    </source>
</evidence>
<evidence type="ECO:0000250" key="2">
    <source>
        <dbReference type="UniProtKB" id="Q9UKS7"/>
    </source>
</evidence>
<evidence type="ECO:0000255" key="3">
    <source>
        <dbReference type="PROSITE-ProRule" id="PRU00042"/>
    </source>
</evidence>
<evidence type="ECO:0000256" key="4">
    <source>
        <dbReference type="SAM" id="MobiDB-lite"/>
    </source>
</evidence>
<evidence type="ECO:0000269" key="5">
    <source>
    </source>
</evidence>
<evidence type="ECO:0000269" key="6">
    <source>
    </source>
</evidence>
<evidence type="ECO:0000269" key="7">
    <source>
    </source>
</evidence>
<evidence type="ECO:0000303" key="8">
    <source>
    </source>
</evidence>
<evidence type="ECO:0000305" key="9"/>
<evidence type="ECO:0007744" key="10">
    <source>
    </source>
</evidence>
<evidence type="ECO:0007829" key="11">
    <source>
        <dbReference type="PDB" id="2MA7"/>
    </source>
</evidence>
<gene>
    <name type="primary">IKZF4</name>
    <name type="synonym">KIAA1782</name>
    <name type="synonym">ZNFN1A4</name>
</gene>
<comment type="function">
    <text evidence="1 5 6 7">DNA-binding protein that binds to the 5'GGGAATRCC-3' Ikaros-binding sequence. Transcriptional repressor. Interacts with SPI1 and MITF to repress transcription of the CTSK and ACP5 promoters via recruitment of corepressors SIN3A and CTBP2. May be involved in the development of central and peripheral nervous systems. Essential for the inhibitory function of regulatory T-cells (Treg). Mediates FOXP3-mediated gene silencing in regulatory T-cells (Treg) via recruitment of corepressor CTBP1 (By similarity).</text>
</comment>
<comment type="subunit">
    <text evidence="1 7">Self-associates. Interacts with other family members; IKZF1, IKZF2, IKZF3 and IKZF5. Interacts with CTBP2. Interacts with SPI1, MITF, FOXP3 and CTBP1 (By similarity).</text>
</comment>
<comment type="interaction">
    <interactant intactId="EBI-1640423">
        <id>Q9H2S9</id>
    </interactant>
    <interactant intactId="EBI-374980">
        <id>O00311</id>
        <label>CDC7</label>
    </interactant>
    <organismsDiffer>false</organismsDiffer>
    <experiments>3</experiments>
</comment>
<comment type="interaction">
    <interactant intactId="EBI-1640423">
        <id>Q9H2S9</id>
    </interactant>
    <interactant intactId="EBI-751621">
        <id>P48730</id>
        <label>CSNK1D</label>
    </interactant>
    <organismsDiffer>false</organismsDiffer>
    <experiments>3</experiments>
</comment>
<comment type="interaction">
    <interactant intactId="EBI-1640423">
        <id>Q9H2S9</id>
    </interactant>
    <interactant intactId="EBI-747204">
        <id>Q9UKT9</id>
        <label>IKZF3</label>
    </interactant>
    <organismsDiffer>false</organismsDiffer>
    <experiments>2</experiments>
</comment>
<comment type="interaction">
    <interactant intactId="EBI-1640423">
        <id>Q9H2S9</id>
    </interactant>
    <interactant intactId="EBI-348259">
        <id>Q96EZ8</id>
        <label>MCRS1</label>
    </interactant>
    <organismsDiffer>false</organismsDiffer>
    <experiments>3</experiments>
</comment>
<comment type="interaction">
    <interactant intactId="EBI-1640423">
        <id>Q9H2S9</id>
    </interactant>
    <interactant intactId="EBI-748229">
        <id>Q9H8S9</id>
        <label>MOB1A</label>
    </interactant>
    <organismsDiffer>false</organismsDiffer>
    <experiments>3</experiments>
</comment>
<comment type="interaction">
    <interactant intactId="EBI-1640423">
        <id>Q9H2S9</id>
    </interactant>
    <interactant intactId="EBI-9679267">
        <id>Q70IA8</id>
        <label>MOB3C</label>
    </interactant>
    <organismsDiffer>false</organismsDiffer>
    <experiments>3</experiments>
</comment>
<comment type="interaction">
    <interactant intactId="EBI-1640423">
        <id>Q9H2S9</id>
    </interactant>
    <interactant intactId="EBI-11974855">
        <id>Q9Y4C2-2</id>
        <label>TCAF1</label>
    </interactant>
    <organismsDiffer>false</organismsDiffer>
    <experiments>3</experiments>
</comment>
<comment type="interaction">
    <interactant intactId="EBI-1640423">
        <id>Q9H2S9</id>
    </interactant>
    <interactant intactId="EBI-710310">
        <id>Q15560</id>
        <label>TCEA2</label>
    </interactant>
    <organismsDiffer>false</organismsDiffer>
    <experiments>3</experiments>
</comment>
<comment type="interaction">
    <interactant intactId="EBI-1640423">
        <id>Q9H2S9</id>
    </interactant>
    <interactant intactId="EBI-7877438">
        <id>P42681</id>
        <label>TXK</label>
    </interactant>
    <organismsDiffer>false</organismsDiffer>
    <experiments>3</experiments>
</comment>
<comment type="subcellular location">
    <subcellularLocation>
        <location evidence="7">Nucleus</location>
    </subcellularLocation>
</comment>
<comment type="alternative products">
    <event type="alternative splicing"/>
    <isoform>
        <id>Q9H2S9-1</id>
        <name>1</name>
        <sequence type="displayed"/>
    </isoform>
    <isoform>
        <id>Q9H2S9-2</id>
        <name>2</name>
        <sequence type="described" ref="VSP_027688"/>
    </isoform>
</comment>
<comment type="tissue specificity">
    <text evidence="5">Highly expressed in skeletal muscle, low levels of expression in heart, thymus, kidney, liver, and spleen. Expressed in the hematopoietic cell lines MOLT-4, NALM-6 and K-562. Highly expressed in THP-1 and M-07e cell lines, which have characteristics of myeloid and early megakaryocytic cells respectively.</text>
</comment>
<comment type="domain">
    <text>The N-terminal zinc fingers are involved in sequence-specific DNA binding and heterotypic associations with other family members.</text>
</comment>
<comment type="domain">
    <text>C-terminal zinc fingers mediate homodimerization.</text>
</comment>
<comment type="miscellaneous">
    <text>'Eos' means 'rising sun' in Greek.</text>
</comment>
<comment type="similarity">
    <text evidence="9">Belongs to the Ikaros C2H2-type zinc-finger protein family.</text>
</comment>
<comment type="sequence caution" evidence="9">
    <conflict type="erroneous initiation">
        <sequence resource="EMBL-CDS" id="AAG39221"/>
    </conflict>
</comment>
<comment type="sequence caution" evidence="9">
    <conflict type="erroneous initiation">
        <sequence resource="EMBL-CDS" id="BAB47411"/>
    </conflict>
</comment>
<protein>
    <recommendedName>
        <fullName>Zinc finger protein Eos</fullName>
    </recommendedName>
    <alternativeName>
        <fullName>Ikaros family zinc finger protein 4</fullName>
    </alternativeName>
</protein>